<accession>P16951</accession>
<accession>Q64089</accession>
<accession>Q64090</accession>
<accession>Q64091</accession>
<comment type="function">
    <text evidence="1">Transcriptional activator which regulates the transcription of various genes, including those involved in anti-apoptosis, cell growth, and DNA damage response. Dependent on its binding partner, binds to CRE (cAMP response element) consensus sequences (5'-TGACGTCA-3') or to AP-1 (activator protein 1) consensus sequences (5'-TGACTCA-3'). In the nucleus, contributes to global transcription and the DNA damage response, in addition to specific transcriptional activities that are related to cell development, proliferation and death. In the cytoplasm, interacts with and perturbs HK1- and VDAC1-containing complexes at the mitochondrial outer membrane, thereby impairing mitochondrial membrane potential, inducing mitochondrial leakage and promoting cell death. The phosphorylated form (mediated by ATM) plays a role in the DNA damage response and is involved in the ionizing radiation (IR)-induced S phase checkpoint control and in the recruitment of the MRN complex into the IR-induced foci (IRIF). Exhibits histone acetyltransferase (HAT) activity which specifically acetylates histones H2B and H4 in vitro. In concert with CUL3 and RBX1, promotes the degradation of KAT5 thereby attenuating its ability to acetylate and activate ATM. Can elicit oncogenic or tumor suppressor activities depending on the tissue or cell type (By similarity).</text>
</comment>
<comment type="subunit">
    <text evidence="1 6">Binds DNA as a dimer and can form a homodimer in the absence of DNA. Can form a heterodimer with JUN. Heterodimerization is essential for its transcriptional activity. Interacts with SMAD3 and SMAD4. Interacts with the HK1/VDAC1 complex. Interacts with NBN, MRE11, XPO1, KAT5 and CUL3 (By similarity). Binds through its N-terminal region to UTF1 which acts as a coactivator of ATF2 transcriptional activity.</text>
</comment>
<comment type="subcellular location">
    <subcellularLocation>
        <location>Nucleus</location>
    </subcellularLocation>
    <subcellularLocation>
        <location evidence="1">Cytoplasm</location>
    </subcellularLocation>
    <subcellularLocation>
        <location evidence="1">Mitochondrion outer membrane</location>
    </subcellularLocation>
    <text evidence="1">Shuttles between the cytoplasm and the nucleus and heterodimerization with JUN is essential for the nuclear localization. Localization to the cytoplasm is observed under conditions of cellular stress and in disease states. Localizes at the mitochondrial outer membrane in response to genotoxic stress. Phosphorylation at Thr-34 is required for its nuclear localization and negatively regulates its mitochondrial localization. Colocalizes with the MRN complex in the IR-induced foci (IRIF) (By similarity).</text>
</comment>
<comment type="alternative products">
    <event type="alternative splicing"/>
    <isoform>
        <id>P16951-1</id>
        <name>1</name>
        <sequence type="displayed"/>
    </isoform>
    <isoform>
        <id>P16951-2</id>
        <name>2</name>
        <sequence type="described" ref="VSP_000590"/>
    </isoform>
    <isoform>
        <id>P16951-3</id>
        <name>3</name>
        <sequence type="described" ref="VSP_000589"/>
    </isoform>
</comment>
<comment type="PTM">
    <text evidence="2">Phosphorylation of Thr-51 by MAPK14 and MAPK11, and at Thr-53 by MAPK1/ERK2, MAPK3/ERK1, MAPK11, MAPK12 and MAPK14 in response to external stimulus like insulin causes increased transcriptional activity. Phosphorylated by PLK3 following hyperosmotic stress. Also phosphorylated and activated by JNK and CaMK4. ATM-mediated phosphorylation at Ser-472 and Ser-480 stimulates its function in DNA damage response. Phosphorylation at Ser-44, Thr-55 and Ser-103 activates its transcriptional activity. Phosphorylation at Thr-51 or Thr-53 enhances acetylation of histones H2B and H4.</text>
</comment>
<comment type="similarity">
    <text evidence="7">Belongs to the bZIP family. ATF subfamily.</text>
</comment>
<comment type="caution">
    <text evidence="2 7">Appears to have histone acetyltransferase (HAT) activity, specifically towards histones H2B and H4 in vitro (By similarity). However, it is not clear if this activity is genuine or caused by contamination with other histone acetyltransferases in the assay.</text>
</comment>
<comment type="sequence caution" evidence="7">
    <conflict type="erroneous initiation">
        <sequence resource="EMBL-CDS" id="AAB21128"/>
    </conflict>
    <text>Truncated N-terminus.</text>
</comment>
<comment type="sequence caution" evidence="7">
    <conflict type="erroneous initiation">
        <sequence resource="EMBL-CDS" id="AAB21129"/>
    </conflict>
    <text>Truncated N-terminus.</text>
</comment>
<feature type="chain" id="PRO_0000076578" description="Cyclic AMP-dependent transcription factor ATF-2">
    <location>
        <begin position="1"/>
        <end position="487"/>
    </location>
</feature>
<feature type="domain" description="bZIP" evidence="4">
    <location>
        <begin position="334"/>
        <end position="397"/>
    </location>
</feature>
<feature type="zinc finger region" description="C2H2-type" evidence="3">
    <location>
        <begin position="7"/>
        <end position="31"/>
    </location>
</feature>
<feature type="region of interest" description="Disordered" evidence="5">
    <location>
        <begin position="106"/>
        <end position="137"/>
    </location>
</feature>
<feature type="region of interest" description="Disordered" evidence="5">
    <location>
        <begin position="241"/>
        <end position="355"/>
    </location>
</feature>
<feature type="region of interest" description="Essential for its histone acetyltransferase activity" evidence="1">
    <location>
        <begin position="278"/>
        <end position="281"/>
    </location>
</feature>
<feature type="region of interest" description="Basic motif" evidence="4">
    <location>
        <begin position="336"/>
        <end position="356"/>
    </location>
</feature>
<feature type="region of interest" description="Leucine-zipper" evidence="4">
    <location>
        <begin position="362"/>
        <end position="390"/>
    </location>
</feature>
<feature type="region of interest" description="Disordered" evidence="5">
    <location>
        <begin position="407"/>
        <end position="453"/>
    </location>
</feature>
<feature type="short sequence motif" description="Nuclear export signal" evidence="1">
    <location>
        <begin position="387"/>
        <end position="396"/>
    </location>
</feature>
<feature type="compositionally biased region" description="Polar residues" evidence="5">
    <location>
        <begin position="264"/>
        <end position="275"/>
    </location>
</feature>
<feature type="compositionally biased region" description="Low complexity" evidence="5">
    <location>
        <begin position="300"/>
        <end position="316"/>
    </location>
</feature>
<feature type="compositionally biased region" description="Basic and acidic residues" evidence="5">
    <location>
        <begin position="328"/>
        <end position="345"/>
    </location>
</feature>
<feature type="compositionally biased region" description="Polar residues" evidence="5">
    <location>
        <begin position="425"/>
        <end position="436"/>
    </location>
</feature>
<feature type="compositionally biased region" description="Low complexity" evidence="5">
    <location>
        <begin position="437"/>
        <end position="449"/>
    </location>
</feature>
<feature type="modified residue" description="Phosphothreonine; by PKC/PRKCH" evidence="2">
    <location>
        <position position="34"/>
    </location>
</feature>
<feature type="modified residue" description="Phosphoserine" evidence="9">
    <location>
        <position position="44"/>
    </location>
</feature>
<feature type="modified residue" description="Phosphothreonine; by MAPK11 and MAPK14" evidence="8 9">
    <location>
        <position position="51"/>
    </location>
</feature>
<feature type="modified residue" description="Phosphothreonine; by MAPK1, MAPK3, MAPK11, MAPK12, MAPK14 and PLK3" evidence="8 9">
    <location>
        <position position="53"/>
    </location>
</feature>
<feature type="modified residue" description="Phosphothreonine; by VRK1" evidence="2">
    <location>
        <position position="55"/>
    </location>
</feature>
<feature type="modified residue" description="Phosphoserine" evidence="9">
    <location>
        <position position="72"/>
    </location>
</feature>
<feature type="modified residue" description="Phosphoserine" evidence="9">
    <location>
        <position position="94"/>
    </location>
</feature>
<feature type="modified residue" description="Phosphothreonine" evidence="2">
    <location>
        <position position="98"/>
    </location>
</feature>
<feature type="modified residue" description="Phosphoserine; by PKC/PRKCA and PKC/PRKCB" evidence="2">
    <location>
        <position position="103"/>
    </location>
</feature>
<feature type="modified residue" description="Phosphoserine" evidence="2">
    <location>
        <position position="118"/>
    </location>
</feature>
<feature type="modified residue" description="Phosphoserine" evidence="2">
    <location>
        <position position="310"/>
    </location>
</feature>
<feature type="modified residue" description="Phosphoserine; by PKC/PRKCA and PKC/PRKCB" evidence="2">
    <location>
        <position position="322"/>
    </location>
</feature>
<feature type="modified residue" description="N6-acetyllysine" evidence="2">
    <location>
        <position position="339"/>
    </location>
</feature>
<feature type="modified residue" description="Phosphoserine; by PKC/PRKCA and PKC/PRKCB" evidence="2">
    <location>
        <position position="349"/>
    </location>
</feature>
<feature type="modified residue" description="N6-acetyllysine" evidence="2">
    <location>
        <position position="356"/>
    </location>
</feature>
<feature type="modified residue" description="Phosphoserine" evidence="2">
    <location>
        <position position="424"/>
    </location>
</feature>
<feature type="modified residue" description="Phosphoserine" evidence="2">
    <location>
        <position position="428"/>
    </location>
</feature>
<feature type="modified residue" description="Phosphoserine; by ATM" evidence="2">
    <location>
        <position position="472"/>
    </location>
</feature>
<feature type="modified residue" description="Phosphoserine; by ATM" evidence="2">
    <location>
        <position position="480"/>
    </location>
</feature>
<feature type="splice variant" id="VSP_000589" description="In isoform 3." evidence="7">
    <original>MSDDKPFLCTAPGCGQRFTNEDHLAVHKHKHEMTLKFGPARNDSVIVA</original>
    <variation>MHCPWVWP</variation>
    <location>
        <begin position="1"/>
        <end position="48"/>
    </location>
</feature>
<feature type="splice variant" id="VSP_000590" description="In isoform 2." evidence="7">
    <location>
        <begin position="132"/>
        <end position="229"/>
    </location>
</feature>
<feature type="sequence conflict" description="In Ref. 1; AAB21128/AAB21129." evidence="7" ref="1">
    <original>AQPSGS</original>
    <variation>HSPQEVD</variation>
    <location>
        <begin position="482"/>
        <end position="487"/>
    </location>
</feature>
<dbReference type="EMBL" id="AF483482">
    <property type="protein sequence ID" value="AAL90756.1"/>
    <property type="molecule type" value="mRNA"/>
</dbReference>
<dbReference type="EMBL" id="AF483483">
    <property type="protein sequence ID" value="AAL90757.1"/>
    <property type="molecule type" value="mRNA"/>
</dbReference>
<dbReference type="EMBL" id="S76657">
    <property type="protein sequence ID" value="AAB21128.1"/>
    <property type="status" value="ALT_INIT"/>
    <property type="molecule type" value="mRNA"/>
</dbReference>
<dbReference type="EMBL" id="S76659">
    <property type="protein sequence ID" value="AAB21129.1"/>
    <property type="status" value="ALT_INIT"/>
    <property type="molecule type" value="mRNA"/>
</dbReference>
<dbReference type="EMBL" id="S76655">
    <property type="protein sequence ID" value="AAB21127.1"/>
    <property type="molecule type" value="mRNA"/>
</dbReference>
<dbReference type="EMBL" id="M31629">
    <property type="protein sequence ID" value="AAA39780.1"/>
    <property type="molecule type" value="mRNA"/>
</dbReference>
<dbReference type="CCDS" id="CCDS16134.1">
    <molecule id="P16951-1"/>
</dbReference>
<dbReference type="CCDS" id="CCDS16135.1">
    <molecule id="P16951-3"/>
</dbReference>
<dbReference type="CCDS" id="CCDS71076.1">
    <molecule id="P16951-2"/>
</dbReference>
<dbReference type="PIR" id="A42026">
    <property type="entry name" value="A42026"/>
</dbReference>
<dbReference type="PIR" id="C42026">
    <property type="entry name" value="C42026"/>
</dbReference>
<dbReference type="RefSeq" id="NP_001020264.1">
    <molecule id="P16951-1"/>
    <property type="nucleotide sequence ID" value="NM_001025093.2"/>
</dbReference>
<dbReference type="RefSeq" id="NP_001271298.1">
    <molecule id="P16951-3"/>
    <property type="nucleotide sequence ID" value="NM_001284369.1"/>
</dbReference>
<dbReference type="RefSeq" id="NP_001271301.1">
    <molecule id="P16951-2"/>
    <property type="nucleotide sequence ID" value="NM_001284372.1"/>
</dbReference>
<dbReference type="RefSeq" id="NP_001271302.1">
    <molecule id="P16951-2"/>
    <property type="nucleotide sequence ID" value="NM_001284373.1"/>
</dbReference>
<dbReference type="RefSeq" id="NP_033845.1">
    <molecule id="P16951-3"/>
    <property type="nucleotide sequence ID" value="NM_009715.3"/>
</dbReference>
<dbReference type="RefSeq" id="XP_030102700.1">
    <molecule id="P16951-1"/>
    <property type="nucleotide sequence ID" value="XM_030246840.2"/>
</dbReference>
<dbReference type="RefSeq" id="XP_030102701.1">
    <molecule id="P16951-1"/>
    <property type="nucleotide sequence ID" value="XM_030246841.2"/>
</dbReference>
<dbReference type="RefSeq" id="XP_030102703.1">
    <molecule id="P16951-1"/>
    <property type="nucleotide sequence ID" value="XM_030246843.2"/>
</dbReference>
<dbReference type="RefSeq" id="XP_030102704.1">
    <molecule id="P16951-1"/>
    <property type="nucleotide sequence ID" value="XM_030246844.2"/>
</dbReference>
<dbReference type="RefSeq" id="XP_030102706.1">
    <molecule id="P16951-3"/>
    <property type="nucleotide sequence ID" value="XM_030246846.2"/>
</dbReference>
<dbReference type="RefSeq" id="XP_030102713.1">
    <molecule id="P16951-2"/>
    <property type="nucleotide sequence ID" value="XM_030246853.2"/>
</dbReference>
<dbReference type="RefSeq" id="XP_030102715.1">
    <molecule id="P16951-2"/>
    <property type="nucleotide sequence ID" value="XM_030246855.1"/>
</dbReference>
<dbReference type="RefSeq" id="XP_030102718.1">
    <molecule id="P16951-2"/>
    <property type="nucleotide sequence ID" value="XM_030246858.1"/>
</dbReference>
<dbReference type="RefSeq" id="XP_030102727.1">
    <molecule id="P16951-2"/>
    <property type="nucleotide sequence ID" value="XM_030246867.1"/>
</dbReference>
<dbReference type="RefSeq" id="XP_036013584.1">
    <molecule id="P16951-1"/>
    <property type="nucleotide sequence ID" value="XM_036157691.1"/>
</dbReference>
<dbReference type="RefSeq" id="XP_036013587.1">
    <molecule id="P16951-1"/>
    <property type="nucleotide sequence ID" value="XM_036157694.1"/>
</dbReference>
<dbReference type="RefSeq" id="XP_036013593.1">
    <molecule id="P16951-1"/>
    <property type="nucleotide sequence ID" value="XM_036157700.1"/>
</dbReference>
<dbReference type="RefSeq" id="XP_036013600.1">
    <molecule id="P16951-3"/>
    <property type="nucleotide sequence ID" value="XM_036157707.1"/>
</dbReference>
<dbReference type="RefSeq" id="XP_036013601.1">
    <molecule id="P16951-3"/>
    <property type="nucleotide sequence ID" value="XM_036157708.1"/>
</dbReference>
<dbReference type="RefSeq" id="XP_036013602.1">
    <molecule id="P16951-2"/>
    <property type="nucleotide sequence ID" value="XM_036157709.1"/>
</dbReference>
<dbReference type="BMRB" id="P16951"/>
<dbReference type="SMR" id="P16951"/>
<dbReference type="BioGRID" id="198233">
    <property type="interactions" value="16"/>
</dbReference>
<dbReference type="FunCoup" id="P16951">
    <property type="interactions" value="5256"/>
</dbReference>
<dbReference type="IntAct" id="P16951">
    <property type="interactions" value="5"/>
</dbReference>
<dbReference type="MINT" id="P16951"/>
<dbReference type="STRING" id="10090.ENSMUSP00000058521"/>
<dbReference type="ChEMBL" id="CHEMBL2176797"/>
<dbReference type="MoonProt" id="P16951"/>
<dbReference type="GlyGen" id="P16951">
    <property type="glycosylation" value="3 sites, 1 O-linked glycan (2 sites)"/>
</dbReference>
<dbReference type="iPTMnet" id="P16951"/>
<dbReference type="PhosphoSitePlus" id="P16951"/>
<dbReference type="SwissPalm" id="P16951"/>
<dbReference type="jPOST" id="P16951"/>
<dbReference type="PaxDb" id="10090-ENSMUSP00000107641"/>
<dbReference type="PeptideAtlas" id="P16951"/>
<dbReference type="ProteomicsDB" id="265142">
    <molecule id="P16951-1"/>
</dbReference>
<dbReference type="ProteomicsDB" id="265143">
    <molecule id="P16951-2"/>
</dbReference>
<dbReference type="ProteomicsDB" id="265144">
    <molecule id="P16951-3"/>
</dbReference>
<dbReference type="Pumba" id="P16951"/>
<dbReference type="Antibodypedia" id="3529">
    <property type="antibodies" value="2489 antibodies from 51 providers"/>
</dbReference>
<dbReference type="DNASU" id="11909"/>
<dbReference type="Ensembl" id="ENSMUST00000055833.12">
    <molecule id="P16951-1"/>
    <property type="protein sequence ID" value="ENSMUSP00000058521.6"/>
    <property type="gene ID" value="ENSMUSG00000027104.19"/>
</dbReference>
<dbReference type="Ensembl" id="ENSMUST00000090802.11">
    <molecule id="P16951-3"/>
    <property type="protein sequence ID" value="ENSMUSP00000088311.5"/>
    <property type="gene ID" value="ENSMUSG00000027104.19"/>
</dbReference>
<dbReference type="Ensembl" id="ENSMUST00000100009.11">
    <molecule id="P16951-1"/>
    <property type="protein sequence ID" value="ENSMUSP00000097588.5"/>
    <property type="gene ID" value="ENSMUSG00000027104.19"/>
</dbReference>
<dbReference type="Ensembl" id="ENSMUST00000112007.8">
    <molecule id="P16951-3"/>
    <property type="protein sequence ID" value="ENSMUSP00000107638.2"/>
    <property type="gene ID" value="ENSMUSG00000027104.19"/>
</dbReference>
<dbReference type="Ensembl" id="ENSMUST00000112010.9">
    <molecule id="P16951-3"/>
    <property type="protein sequence ID" value="ENSMUSP00000107641.3"/>
    <property type="gene ID" value="ENSMUSG00000027104.19"/>
</dbReference>
<dbReference type="Ensembl" id="ENSMUST00000112016.9">
    <molecule id="P16951-2"/>
    <property type="protein sequence ID" value="ENSMUSP00000107647.3"/>
    <property type="gene ID" value="ENSMUSG00000027104.19"/>
</dbReference>
<dbReference type="Ensembl" id="ENSMUST00000112017.8">
    <molecule id="P16951-1"/>
    <property type="protein sequence ID" value="ENSMUSP00000107648.2"/>
    <property type="gene ID" value="ENSMUSG00000027104.19"/>
</dbReference>
<dbReference type="GeneID" id="11909"/>
<dbReference type="KEGG" id="mmu:11909"/>
<dbReference type="UCSC" id="uc008kdd.2">
    <molecule id="P16951-1"/>
    <property type="organism name" value="mouse"/>
</dbReference>
<dbReference type="AGR" id="MGI:109349"/>
<dbReference type="CTD" id="1386"/>
<dbReference type="MGI" id="MGI:109349">
    <property type="gene designation" value="Atf2"/>
</dbReference>
<dbReference type="VEuPathDB" id="HostDB:ENSMUSG00000027104"/>
<dbReference type="eggNOG" id="KOG1414">
    <property type="taxonomic scope" value="Eukaryota"/>
</dbReference>
<dbReference type="GeneTree" id="ENSGT00940000156582"/>
<dbReference type="HOGENOM" id="CLU_021564_0_0_1"/>
<dbReference type="InParanoid" id="P16951"/>
<dbReference type="OMA" id="YQTADKD"/>
<dbReference type="OrthoDB" id="295274at2759"/>
<dbReference type="PhylomeDB" id="P16951"/>
<dbReference type="Reactome" id="R-MMU-3214847">
    <property type="pathway name" value="HATs acetylate histones"/>
</dbReference>
<dbReference type="Reactome" id="R-MMU-450341">
    <property type="pathway name" value="Activation of the AP-1 family of transcription factors"/>
</dbReference>
<dbReference type="BioGRID-ORCS" id="11909">
    <property type="hits" value="1 hit in 83 CRISPR screens"/>
</dbReference>
<dbReference type="ChiTaRS" id="Atf2">
    <property type="organism name" value="mouse"/>
</dbReference>
<dbReference type="PRO" id="PR:P16951"/>
<dbReference type="Proteomes" id="UP000000589">
    <property type="component" value="Chromosome 2"/>
</dbReference>
<dbReference type="RNAct" id="P16951">
    <property type="molecule type" value="protein"/>
</dbReference>
<dbReference type="Bgee" id="ENSMUSG00000027104">
    <property type="expression patterns" value="Expressed in paraventricular nucleus of hypothalamus and 270 other cell types or tissues"/>
</dbReference>
<dbReference type="ExpressionAtlas" id="P16951">
    <property type="expression patterns" value="baseline and differential"/>
</dbReference>
<dbReference type="GO" id="GO:0016602">
    <property type="term" value="C:CCAAT-binding factor complex"/>
    <property type="evidence" value="ECO:0000266"/>
    <property type="project" value="MGI"/>
</dbReference>
<dbReference type="GO" id="GO:0005737">
    <property type="term" value="C:cytoplasm"/>
    <property type="evidence" value="ECO:0000250"/>
    <property type="project" value="UniProtKB"/>
</dbReference>
<dbReference type="GO" id="GO:1902562">
    <property type="term" value="C:H4 histone acetyltransferase complex"/>
    <property type="evidence" value="ECO:0007669"/>
    <property type="project" value="Ensembl"/>
</dbReference>
<dbReference type="GO" id="GO:0016020">
    <property type="term" value="C:membrane"/>
    <property type="evidence" value="ECO:0000314"/>
    <property type="project" value="MGI"/>
</dbReference>
<dbReference type="GO" id="GO:0005741">
    <property type="term" value="C:mitochondrial outer membrane"/>
    <property type="evidence" value="ECO:0000250"/>
    <property type="project" value="UniProtKB"/>
</dbReference>
<dbReference type="GO" id="GO:0005654">
    <property type="term" value="C:nucleoplasm"/>
    <property type="evidence" value="ECO:0007669"/>
    <property type="project" value="Ensembl"/>
</dbReference>
<dbReference type="GO" id="GO:0005634">
    <property type="term" value="C:nucleus"/>
    <property type="evidence" value="ECO:0000314"/>
    <property type="project" value="MGI"/>
</dbReference>
<dbReference type="GO" id="GO:0035861">
    <property type="term" value="C:site of double-strand break"/>
    <property type="evidence" value="ECO:0000315"/>
    <property type="project" value="CAFA"/>
</dbReference>
<dbReference type="GO" id="GO:0035497">
    <property type="term" value="F:cAMP response element binding"/>
    <property type="evidence" value="ECO:0000314"/>
    <property type="project" value="MGI"/>
</dbReference>
<dbReference type="GO" id="GO:0008140">
    <property type="term" value="F:cAMP response element binding protein binding"/>
    <property type="evidence" value="ECO:0007669"/>
    <property type="project" value="Ensembl"/>
</dbReference>
<dbReference type="GO" id="GO:0003682">
    <property type="term" value="F:chromatin binding"/>
    <property type="evidence" value="ECO:0000314"/>
    <property type="project" value="MGI"/>
</dbReference>
<dbReference type="GO" id="GO:0003677">
    <property type="term" value="F:DNA binding"/>
    <property type="evidence" value="ECO:0000314"/>
    <property type="project" value="MGI"/>
</dbReference>
<dbReference type="GO" id="GO:0001228">
    <property type="term" value="F:DNA-binding transcription activator activity, RNA polymerase II-specific"/>
    <property type="evidence" value="ECO:0000314"/>
    <property type="project" value="MGI"/>
</dbReference>
<dbReference type="GO" id="GO:0003700">
    <property type="term" value="F:DNA-binding transcription factor activity"/>
    <property type="evidence" value="ECO:0000266"/>
    <property type="project" value="MGI"/>
</dbReference>
<dbReference type="GO" id="GO:0044013">
    <property type="term" value="F:histone H2B acetyltransferase activity"/>
    <property type="evidence" value="ECO:0007669"/>
    <property type="project" value="Ensembl"/>
</dbReference>
<dbReference type="GO" id="GO:0010485">
    <property type="term" value="F:histone H4 acetyltransferase activity"/>
    <property type="evidence" value="ECO:0007669"/>
    <property type="project" value="Ensembl"/>
</dbReference>
<dbReference type="GO" id="GO:0043522">
    <property type="term" value="F:leucine zipper domain binding"/>
    <property type="evidence" value="ECO:0000353"/>
    <property type="project" value="MGI"/>
</dbReference>
<dbReference type="GO" id="GO:1990841">
    <property type="term" value="F:promoter-specific chromatin binding"/>
    <property type="evidence" value="ECO:0000314"/>
    <property type="project" value="MGI"/>
</dbReference>
<dbReference type="GO" id="GO:0046982">
    <property type="term" value="F:protein heterodimerization activity"/>
    <property type="evidence" value="ECO:0000353"/>
    <property type="project" value="MGI"/>
</dbReference>
<dbReference type="GO" id="GO:0042803">
    <property type="term" value="F:protein homodimerization activity"/>
    <property type="evidence" value="ECO:0000353"/>
    <property type="project" value="MGI"/>
</dbReference>
<dbReference type="GO" id="GO:0019901">
    <property type="term" value="F:protein kinase binding"/>
    <property type="evidence" value="ECO:0007669"/>
    <property type="project" value="Ensembl"/>
</dbReference>
<dbReference type="GO" id="GO:0000978">
    <property type="term" value="F:RNA polymerase II cis-regulatory region sequence-specific DNA binding"/>
    <property type="evidence" value="ECO:0000314"/>
    <property type="project" value="MGI"/>
</dbReference>
<dbReference type="GO" id="GO:0061629">
    <property type="term" value="F:RNA polymerase II-specific DNA-binding transcription factor binding"/>
    <property type="evidence" value="ECO:0007669"/>
    <property type="project" value="Ensembl"/>
</dbReference>
<dbReference type="GO" id="GO:0043565">
    <property type="term" value="F:sequence-specific DNA binding"/>
    <property type="evidence" value="ECO:0000315"/>
    <property type="project" value="CAFA"/>
</dbReference>
<dbReference type="GO" id="GO:0008270">
    <property type="term" value="F:zinc ion binding"/>
    <property type="evidence" value="ECO:0007669"/>
    <property type="project" value="UniProtKB-KW"/>
</dbReference>
<dbReference type="GO" id="GO:0021742">
    <property type="term" value="P:abducens nucleus development"/>
    <property type="evidence" value="ECO:0000315"/>
    <property type="project" value="MGI"/>
</dbReference>
<dbReference type="GO" id="GO:0060612">
    <property type="term" value="P:adipose tissue development"/>
    <property type="evidence" value="ECO:0000316"/>
    <property type="project" value="MGI"/>
</dbReference>
<dbReference type="GO" id="GO:0006915">
    <property type="term" value="P:apoptotic process"/>
    <property type="evidence" value="ECO:0000315"/>
    <property type="project" value="MGI"/>
</dbReference>
<dbReference type="GO" id="GO:1902742">
    <property type="term" value="P:apoptotic process involved in development"/>
    <property type="evidence" value="ECO:0000315"/>
    <property type="project" value="MGI"/>
</dbReference>
<dbReference type="GO" id="GO:0030509">
    <property type="term" value="P:BMP signaling pathway"/>
    <property type="evidence" value="ECO:0000315"/>
    <property type="project" value="MGI"/>
</dbReference>
<dbReference type="GO" id="GO:0003360">
    <property type="term" value="P:brainstem development"/>
    <property type="evidence" value="ECO:0000315"/>
    <property type="project" value="MGI"/>
</dbReference>
<dbReference type="GO" id="GO:0072740">
    <property type="term" value="P:cellular response to anisomycin"/>
    <property type="evidence" value="ECO:0000314"/>
    <property type="project" value="MGI"/>
</dbReference>
<dbReference type="GO" id="GO:1990253">
    <property type="term" value="P:cellular response to leucine starvation"/>
    <property type="evidence" value="ECO:0000315"/>
    <property type="project" value="MGI"/>
</dbReference>
<dbReference type="GO" id="GO:0034599">
    <property type="term" value="P:cellular response to oxidative stress"/>
    <property type="evidence" value="ECO:0000315"/>
    <property type="project" value="MGI"/>
</dbReference>
<dbReference type="GO" id="GO:0098586">
    <property type="term" value="P:cellular response to virus"/>
    <property type="evidence" value="ECO:0000314"/>
    <property type="project" value="MGI"/>
</dbReference>
<dbReference type="GO" id="GO:0060245">
    <property type="term" value="P:detection of cell density"/>
    <property type="evidence" value="ECO:0000315"/>
    <property type="project" value="MGI"/>
</dbReference>
<dbReference type="GO" id="GO:0006974">
    <property type="term" value="P:DNA damage response"/>
    <property type="evidence" value="ECO:0000315"/>
    <property type="project" value="CAFA"/>
</dbReference>
<dbReference type="GO" id="GO:0021754">
    <property type="term" value="P:facial nucleus development"/>
    <property type="evidence" value="ECO:0000315"/>
    <property type="project" value="MGI"/>
</dbReference>
<dbReference type="GO" id="GO:0010467">
    <property type="term" value="P:gene expression"/>
    <property type="evidence" value="ECO:0000314"/>
    <property type="project" value="MGI"/>
</dbReference>
<dbReference type="GO" id="GO:0003418">
    <property type="term" value="P:growth plate cartilage chondrocyte differentiation"/>
    <property type="evidence" value="ECO:0000315"/>
    <property type="project" value="MGI"/>
</dbReference>
<dbReference type="GO" id="GO:0003419">
    <property type="term" value="P:growth plate cartilage chondrocyte proliferation"/>
    <property type="evidence" value="ECO:0000315"/>
    <property type="project" value="MGI"/>
</dbReference>
<dbReference type="GO" id="GO:0007507">
    <property type="term" value="P:heart development"/>
    <property type="evidence" value="ECO:0000316"/>
    <property type="project" value="MGI"/>
</dbReference>
<dbReference type="GO" id="GO:0002244">
    <property type="term" value="P:hematopoietic progenitor cell differentiation"/>
    <property type="evidence" value="ECO:0000316"/>
    <property type="project" value="MGI"/>
</dbReference>
<dbReference type="GO" id="GO:0097284">
    <property type="term" value="P:hepatocyte apoptotic process"/>
    <property type="evidence" value="ECO:0000316"/>
    <property type="project" value="MGI"/>
</dbReference>
<dbReference type="GO" id="GO:0021743">
    <property type="term" value="P:hypoglossal nucleus development"/>
    <property type="evidence" value="ECO:0000315"/>
    <property type="project" value="MGI"/>
</dbReference>
<dbReference type="GO" id="GO:0001701">
    <property type="term" value="P:in utero embryonic development"/>
    <property type="evidence" value="ECO:0000315"/>
    <property type="project" value="MGI"/>
</dbReference>
<dbReference type="GO" id="GO:1990144">
    <property type="term" value="P:intrinsic apoptotic signaling pathway in response to hypoxia"/>
    <property type="evidence" value="ECO:0000315"/>
    <property type="project" value="MGI"/>
</dbReference>
<dbReference type="GO" id="GO:0007254">
    <property type="term" value="P:JNK cascade"/>
    <property type="evidence" value="ECO:0000315"/>
    <property type="project" value="MGI"/>
</dbReference>
<dbReference type="GO" id="GO:0006629">
    <property type="term" value="P:lipid metabolic process"/>
    <property type="evidence" value="ECO:0000315"/>
    <property type="project" value="MGI"/>
</dbReference>
<dbReference type="GO" id="GO:0001889">
    <property type="term" value="P:liver development"/>
    <property type="evidence" value="ECO:0000316"/>
    <property type="project" value="MGI"/>
</dbReference>
<dbReference type="GO" id="GO:0000165">
    <property type="term" value="P:MAPK cascade"/>
    <property type="evidence" value="ECO:0000315"/>
    <property type="project" value="MGI"/>
</dbReference>
<dbReference type="GO" id="GO:0031573">
    <property type="term" value="P:mitotic intra-S DNA damage checkpoint signaling"/>
    <property type="evidence" value="ECO:0000250"/>
    <property type="project" value="UniProtKB"/>
</dbReference>
<dbReference type="GO" id="GO:0097049">
    <property type="term" value="P:motor neuron apoptotic process"/>
    <property type="evidence" value="ECO:0000315"/>
    <property type="project" value="MGI"/>
</dbReference>
<dbReference type="GO" id="GO:0042789">
    <property type="term" value="P:mRNA transcription by RNA polymerase II"/>
    <property type="evidence" value="ECO:0000315"/>
    <property type="project" value="MGI"/>
</dbReference>
<dbReference type="GO" id="GO:0016525">
    <property type="term" value="P:negative regulation of angiogenesis"/>
    <property type="evidence" value="ECO:0007669"/>
    <property type="project" value="Ensembl"/>
</dbReference>
<dbReference type="GO" id="GO:0060052">
    <property type="term" value="P:neurofilament cytoskeleton organization"/>
    <property type="evidence" value="ECO:0000315"/>
    <property type="project" value="MGI"/>
</dbReference>
<dbReference type="GO" id="GO:0001865">
    <property type="term" value="P:NK T cell differentiation"/>
    <property type="evidence" value="ECO:0000315"/>
    <property type="project" value="MGI"/>
</dbReference>
<dbReference type="GO" id="GO:0003151">
    <property type="term" value="P:outflow tract morphogenesis"/>
    <property type="evidence" value="ECO:0000315"/>
    <property type="project" value="MGI"/>
</dbReference>
<dbReference type="GO" id="GO:0038066">
    <property type="term" value="P:p38MAPK cascade"/>
    <property type="evidence" value="ECO:0000315"/>
    <property type="project" value="MGI"/>
</dbReference>
<dbReference type="GO" id="GO:0110024">
    <property type="term" value="P:positive regulation of cardiac muscle myoblast proliferation"/>
    <property type="evidence" value="ECO:0007669"/>
    <property type="project" value="Ensembl"/>
</dbReference>
<dbReference type="GO" id="GO:0051091">
    <property type="term" value="P:positive regulation of DNA-binding transcription factor activity"/>
    <property type="evidence" value="ECO:0000250"/>
    <property type="project" value="UniProtKB"/>
</dbReference>
<dbReference type="GO" id="GO:1902110">
    <property type="term" value="P:positive regulation of mitochondrial membrane permeability involved in apoptotic process"/>
    <property type="evidence" value="ECO:0000250"/>
    <property type="project" value="UniProtKB"/>
</dbReference>
<dbReference type="GO" id="GO:0045944">
    <property type="term" value="P:positive regulation of transcription by RNA polymerase II"/>
    <property type="evidence" value="ECO:0000314"/>
    <property type="project" value="MGI"/>
</dbReference>
<dbReference type="GO" id="GO:0032915">
    <property type="term" value="P:positive regulation of transforming growth factor beta2 production"/>
    <property type="evidence" value="ECO:0000315"/>
    <property type="project" value="MGI"/>
</dbReference>
<dbReference type="GO" id="GO:0006606">
    <property type="term" value="P:protein import into nucleus"/>
    <property type="evidence" value="ECO:0000314"/>
    <property type="project" value="MGI"/>
</dbReference>
<dbReference type="GO" id="GO:0006355">
    <property type="term" value="P:regulation of DNA-templated transcription"/>
    <property type="evidence" value="ECO:0000250"/>
    <property type="project" value="UniProtKB"/>
</dbReference>
<dbReference type="GO" id="GO:0006357">
    <property type="term" value="P:regulation of transcription by RNA polymerase II"/>
    <property type="evidence" value="ECO:0000314"/>
    <property type="project" value="MGI"/>
</dbReference>
<dbReference type="GO" id="GO:0006970">
    <property type="term" value="P:response to osmotic stress"/>
    <property type="evidence" value="ECO:0000250"/>
    <property type="project" value="UniProtKB"/>
</dbReference>
<dbReference type="GO" id="GO:0045815">
    <property type="term" value="P:transcription initiation-coupled chromatin remodeling"/>
    <property type="evidence" value="ECO:0007669"/>
    <property type="project" value="Ensembl"/>
</dbReference>
<dbReference type="GO" id="GO:0007033">
    <property type="term" value="P:vacuole organization"/>
    <property type="evidence" value="ECO:0000315"/>
    <property type="project" value="MGI"/>
</dbReference>
<dbReference type="GO" id="GO:0050872">
    <property type="term" value="P:white fat cell differentiation"/>
    <property type="evidence" value="ECO:0000315"/>
    <property type="project" value="MGI"/>
</dbReference>
<dbReference type="CDD" id="cd14687">
    <property type="entry name" value="bZIP_ATF2"/>
    <property type="match status" value="1"/>
</dbReference>
<dbReference type="CDD" id="cd12192">
    <property type="entry name" value="GCN4_cent"/>
    <property type="match status" value="1"/>
</dbReference>
<dbReference type="FunFam" id="1.20.5.170:FF:000010">
    <property type="entry name" value="Cyclic AMP-dependent transcription factor ATF-2"/>
    <property type="match status" value="1"/>
</dbReference>
<dbReference type="Gene3D" id="1.20.5.170">
    <property type="match status" value="1"/>
</dbReference>
<dbReference type="Gene3D" id="3.30.160.60">
    <property type="entry name" value="Classic Zinc Finger"/>
    <property type="match status" value="1"/>
</dbReference>
<dbReference type="InterPro" id="IPR004827">
    <property type="entry name" value="bZIP"/>
</dbReference>
<dbReference type="InterPro" id="IPR046347">
    <property type="entry name" value="bZIP_sf"/>
</dbReference>
<dbReference type="InterPro" id="IPR051027">
    <property type="entry name" value="bZIP_transcription_factors"/>
</dbReference>
<dbReference type="InterPro" id="IPR016378">
    <property type="entry name" value="TF_CRE-BP1-typ"/>
</dbReference>
<dbReference type="InterPro" id="IPR036236">
    <property type="entry name" value="Znf_C2H2_sf"/>
</dbReference>
<dbReference type="InterPro" id="IPR013087">
    <property type="entry name" value="Znf_C2H2_type"/>
</dbReference>
<dbReference type="PANTHER" id="PTHR19304">
    <property type="entry name" value="CYCLIC-AMP RESPONSE ELEMENT BINDING PROTEIN"/>
    <property type="match status" value="1"/>
</dbReference>
<dbReference type="Pfam" id="PF00170">
    <property type="entry name" value="bZIP_1"/>
    <property type="match status" value="1"/>
</dbReference>
<dbReference type="PIRSF" id="PIRSF003153">
    <property type="entry name" value="ATF2_CRE-BP1"/>
    <property type="match status" value="1"/>
</dbReference>
<dbReference type="SMART" id="SM00338">
    <property type="entry name" value="BRLZ"/>
    <property type="match status" value="1"/>
</dbReference>
<dbReference type="SUPFAM" id="SSF57667">
    <property type="entry name" value="beta-beta-alpha zinc fingers"/>
    <property type="match status" value="1"/>
</dbReference>
<dbReference type="SUPFAM" id="SSF57959">
    <property type="entry name" value="Leucine zipper domain"/>
    <property type="match status" value="1"/>
</dbReference>
<dbReference type="PROSITE" id="PS50217">
    <property type="entry name" value="BZIP"/>
    <property type="match status" value="1"/>
</dbReference>
<dbReference type="PROSITE" id="PS00036">
    <property type="entry name" value="BZIP_BASIC"/>
    <property type="match status" value="1"/>
</dbReference>
<dbReference type="PROSITE" id="PS00028">
    <property type="entry name" value="ZINC_FINGER_C2H2_1"/>
    <property type="match status" value="1"/>
</dbReference>
<dbReference type="PROSITE" id="PS50157">
    <property type="entry name" value="ZINC_FINGER_C2H2_2"/>
    <property type="match status" value="1"/>
</dbReference>
<protein>
    <recommendedName>
        <fullName>Cyclic AMP-dependent transcription factor ATF-2</fullName>
        <shortName>cAMP-dependent transcription factor ATF-2</shortName>
    </recommendedName>
    <alternativeName>
        <fullName>Activating transcription factor 2</fullName>
    </alternativeName>
    <alternativeName>
        <fullName>MXBP protein</fullName>
    </alternativeName>
    <alternativeName>
        <fullName>cAMP response element-binding protein CRE-BP1</fullName>
    </alternativeName>
</protein>
<keyword id="KW-0007">Acetylation</keyword>
<keyword id="KW-0010">Activator</keyword>
<keyword id="KW-0025">Alternative splicing</keyword>
<keyword id="KW-0963">Cytoplasm</keyword>
<keyword id="KW-0227">DNA damage</keyword>
<keyword id="KW-0238">DNA-binding</keyword>
<keyword id="KW-0472">Membrane</keyword>
<keyword id="KW-0479">Metal-binding</keyword>
<keyword id="KW-0496">Mitochondrion</keyword>
<keyword id="KW-1000">Mitochondrion outer membrane</keyword>
<keyword id="KW-0539">Nucleus</keyword>
<keyword id="KW-0597">Phosphoprotein</keyword>
<keyword id="KW-1185">Reference proteome</keyword>
<keyword id="KW-0804">Transcription</keyword>
<keyword id="KW-0805">Transcription regulation</keyword>
<keyword id="KW-0862">Zinc</keyword>
<keyword id="KW-0863">Zinc-finger</keyword>
<reference key="1">
    <citation type="journal article" date="2001" name="Mamm. Genome">
        <title>High-throughput sequence identification of gene coding variants within alcohol-related QTLs.</title>
        <authorList>
            <person name="Ehringer M.A."/>
            <person name="Thompson J."/>
            <person name="Conroy O."/>
            <person name="Xu Y."/>
            <person name="Yang F."/>
            <person name="Canniff J."/>
            <person name="Beeson M."/>
            <person name="Gordon L."/>
            <person name="Bennett B."/>
            <person name="Johnson T.E."/>
            <person name="Sikela J.M."/>
        </authorList>
    </citation>
    <scope>NUCLEOTIDE SEQUENCE [MRNA] (ISOFORM 1)</scope>
    <source>
        <strain>ILS</strain>
        <strain>ISS</strain>
    </source>
</reference>
<reference key="2">
    <citation type="journal article" date="1992" name="Mol. Cell. Biol.">
        <title>Functionally distinct isoforms of the CRE-BP DNA-binding protein mediate activity of a T-cell-specific enhancer.</title>
        <authorList>
            <person name="Georgopoulos K."/>
            <person name="Morgan B.A."/>
            <person name="Moore D.D."/>
        </authorList>
    </citation>
    <scope>NUCLEOTIDE SEQUENCE [MRNA] OF 9-487</scope>
    <scope>ALTERNATIVE SPLICING</scope>
</reference>
<reference key="3">
    <citation type="journal article" date="1990" name="Mol. Cell. Biol.">
        <title>mXBP/CRE-BP2 and c-Jun form a complex which binds to the cyclic AMP, but not to the 12-O-tetradecanoylphorbol-13-acetate, response element.</title>
        <authorList>
            <person name="Ivashkiv L.B."/>
            <person name="Liou H.-C."/>
            <person name="Kara C.J."/>
            <person name="Lamph W.W."/>
            <person name="Verma I.M."/>
            <person name="Glimcher L.H."/>
        </authorList>
    </citation>
    <scope>NUCLEOTIDE SEQUENCE [MRNA] OF 77-487</scope>
</reference>
<reference key="4">
    <citation type="journal article" date="1998" name="EMBO J.">
        <title>UTF1, a novel transcriptional coactivator expressed in pluripotent embryonic stem cells and extra-embryonic cells.</title>
        <authorList>
            <person name="Okuda A."/>
            <person name="Fukushima A."/>
            <person name="Nishimoto M."/>
            <person name="Orimo A."/>
            <person name="Yamagishi T."/>
            <person name="Nabeshima Y."/>
            <person name="Kuro-o M."/>
            <person name="Nabeshima Y."/>
            <person name="Boon K."/>
            <person name="Keaveney M."/>
            <person name="Stunnenberg H.G."/>
            <person name="Muramatsu M."/>
        </authorList>
    </citation>
    <scope>INTERACTION WITH UTF1</scope>
</reference>
<reference key="5">
    <citation type="journal article" date="2007" name="Proc. Natl. Acad. Sci. U.S.A.">
        <title>Large-scale phosphorylation analysis of mouse liver.</title>
        <authorList>
            <person name="Villen J."/>
            <person name="Beausoleil S.A."/>
            <person name="Gerber S.A."/>
            <person name="Gygi S.P."/>
        </authorList>
    </citation>
    <scope>PHOSPHORYLATION [LARGE SCALE ANALYSIS] AT THR-51 AND THR-53</scope>
    <scope>IDENTIFICATION BY MASS SPECTROMETRY [LARGE SCALE ANALYSIS]</scope>
    <source>
        <tissue>Liver</tissue>
    </source>
</reference>
<reference key="6">
    <citation type="journal article" date="2010" name="Cell">
        <title>A tissue-specific atlas of mouse protein phosphorylation and expression.</title>
        <authorList>
            <person name="Huttlin E.L."/>
            <person name="Jedrychowski M.P."/>
            <person name="Elias J.E."/>
            <person name="Goswami T."/>
            <person name="Rad R."/>
            <person name="Beausoleil S.A."/>
            <person name="Villen J."/>
            <person name="Haas W."/>
            <person name="Sowa M.E."/>
            <person name="Gygi S.P."/>
        </authorList>
    </citation>
    <scope>PHOSPHORYLATION [LARGE SCALE ANALYSIS] AT SER-44; THR-51; THR-53; SER-72 AND SER-94</scope>
    <scope>IDENTIFICATION BY MASS SPECTROMETRY [LARGE SCALE ANALYSIS]</scope>
    <source>
        <tissue>Brain</tissue>
        <tissue>Brown adipose tissue</tissue>
        <tissue>Heart</tissue>
        <tissue>Kidney</tissue>
        <tissue>Liver</tissue>
        <tissue>Lung</tissue>
        <tissue>Pancreas</tissue>
        <tissue>Spleen</tissue>
        <tissue>Testis</tissue>
    </source>
</reference>
<proteinExistence type="evidence at protein level"/>
<name>ATF2_MOUSE</name>
<sequence length="487" mass="52298">MSDDKPFLCTAPGCGQRFTNEDHLAVHKHKHEMTLKFGPARNDSVIVADQTPTPTRFLKNCEEVGLFNELASPFENEFKKASEDDIKKMPLDLSPLATPIIRSKIEEPSVVETTHQDSPLPHPESTTSDEKEVPLAQTAQPTSAIVRPASLQVPNVLLTSSDSSVIIQQAVPSPTSSTVITQAPSSNRPIVPVPGPFPLLLHLPNGQTMPVAIPASITSSNVHVPAAVPLVRPVTMVPSVPGIPGPSSPQPVQSEAKMRLKAALTQQHPPVTNGDTVKGHGSGLVRTQSEESRPQSLQQPATSTTETPASPAHTTPQTQNTSGRRRRAANEDPDEKRRKFLERNRAAASRCRQKRKVWVQSLEKKAEDLSSLNGQLQSEVTLLRNEVAQLKQLLLAHKDCPVTAMQKKSGYHTADKDDSSEDLSVPSSPHTEAIQHSSVSTSNGVSSTSKAEAVATSVLTQMADQSTEPALSQIVMAPPSQAQPSGS</sequence>
<gene>
    <name type="primary">Atf2</name>
</gene>
<organism>
    <name type="scientific">Mus musculus</name>
    <name type="common">Mouse</name>
    <dbReference type="NCBI Taxonomy" id="10090"/>
    <lineage>
        <taxon>Eukaryota</taxon>
        <taxon>Metazoa</taxon>
        <taxon>Chordata</taxon>
        <taxon>Craniata</taxon>
        <taxon>Vertebrata</taxon>
        <taxon>Euteleostomi</taxon>
        <taxon>Mammalia</taxon>
        <taxon>Eutheria</taxon>
        <taxon>Euarchontoglires</taxon>
        <taxon>Glires</taxon>
        <taxon>Rodentia</taxon>
        <taxon>Myomorpha</taxon>
        <taxon>Muroidea</taxon>
        <taxon>Muridae</taxon>
        <taxon>Murinae</taxon>
        <taxon>Mus</taxon>
        <taxon>Mus</taxon>
    </lineage>
</organism>
<evidence type="ECO:0000250" key="1"/>
<evidence type="ECO:0000250" key="2">
    <source>
        <dbReference type="UniProtKB" id="P15336"/>
    </source>
</evidence>
<evidence type="ECO:0000255" key="3">
    <source>
        <dbReference type="PROSITE-ProRule" id="PRU00042"/>
    </source>
</evidence>
<evidence type="ECO:0000255" key="4">
    <source>
        <dbReference type="PROSITE-ProRule" id="PRU00978"/>
    </source>
</evidence>
<evidence type="ECO:0000256" key="5">
    <source>
        <dbReference type="SAM" id="MobiDB-lite"/>
    </source>
</evidence>
<evidence type="ECO:0000269" key="6">
    <source>
    </source>
</evidence>
<evidence type="ECO:0000305" key="7"/>
<evidence type="ECO:0007744" key="8">
    <source>
    </source>
</evidence>
<evidence type="ECO:0007744" key="9">
    <source>
    </source>
</evidence>